<feature type="chain" id="PRO_1000099430" description="DNA repair protein RecO">
    <location>
        <begin position="1"/>
        <end position="243"/>
    </location>
</feature>
<protein>
    <recommendedName>
        <fullName evidence="1">DNA repair protein RecO</fullName>
    </recommendedName>
    <alternativeName>
        <fullName evidence="1">Recombination protein O</fullName>
    </alternativeName>
</protein>
<gene>
    <name evidence="1" type="primary">recO</name>
    <name type="ordered locus">XfasM23_1377</name>
</gene>
<name>RECO_XYLF2</name>
<reference key="1">
    <citation type="journal article" date="2010" name="J. Bacteriol.">
        <title>Whole genome sequences of two Xylella fastidiosa strains (M12 and M23) causing almond leaf scorch disease in California.</title>
        <authorList>
            <person name="Chen J."/>
            <person name="Xie G."/>
            <person name="Han S."/>
            <person name="Chertkov O."/>
            <person name="Sims D."/>
            <person name="Civerolo E.L."/>
        </authorList>
    </citation>
    <scope>NUCLEOTIDE SEQUENCE [LARGE SCALE GENOMIC DNA]</scope>
    <source>
        <strain>M23</strain>
    </source>
</reference>
<organism>
    <name type="scientific">Xylella fastidiosa (strain M23)</name>
    <dbReference type="NCBI Taxonomy" id="405441"/>
    <lineage>
        <taxon>Bacteria</taxon>
        <taxon>Pseudomonadati</taxon>
        <taxon>Pseudomonadota</taxon>
        <taxon>Gammaproteobacteria</taxon>
        <taxon>Lysobacterales</taxon>
        <taxon>Lysobacteraceae</taxon>
        <taxon>Xylella</taxon>
    </lineage>
</organism>
<sequence length="243" mass="27440">MLIEHEVAFVLHVRPWRETSLLVEVLTQAYGRLGLIARGVQGLKKQTLRAALQPLQWIRFSAIQRGELGQLRQAEALDTAPRLKGETMLASFYINELLLRLVPRHAPVNELYLAYSQTRERLRTNDSLAWSLRLFELDILETLGVGFNLECDANGTPLDPAARYVLDPLEGPRLLLSEHNNAERRDTATGHVLLALAHKQIPNTNDLAGLRRSMRAVLLHHLGGRGLKSWEMIAAFRHQDTSP</sequence>
<proteinExistence type="inferred from homology"/>
<keyword id="KW-0227">DNA damage</keyword>
<keyword id="KW-0233">DNA recombination</keyword>
<keyword id="KW-0234">DNA repair</keyword>
<comment type="function">
    <text evidence="1">Involved in DNA repair and RecF pathway recombination.</text>
</comment>
<comment type="similarity">
    <text evidence="1">Belongs to the RecO family.</text>
</comment>
<evidence type="ECO:0000255" key="1">
    <source>
        <dbReference type="HAMAP-Rule" id="MF_00201"/>
    </source>
</evidence>
<dbReference type="EMBL" id="CP001011">
    <property type="protein sequence ID" value="ACB92795.1"/>
    <property type="molecule type" value="Genomic_DNA"/>
</dbReference>
<dbReference type="RefSeq" id="WP_004088289.1">
    <property type="nucleotide sequence ID" value="NC_010577.1"/>
</dbReference>
<dbReference type="SMR" id="B2I606"/>
<dbReference type="GeneID" id="93905106"/>
<dbReference type="KEGG" id="xfn:XfasM23_1377"/>
<dbReference type="HOGENOM" id="CLU_066645_1_0_6"/>
<dbReference type="Proteomes" id="UP000001698">
    <property type="component" value="Chromosome"/>
</dbReference>
<dbReference type="GO" id="GO:0043590">
    <property type="term" value="C:bacterial nucleoid"/>
    <property type="evidence" value="ECO:0007669"/>
    <property type="project" value="TreeGrafter"/>
</dbReference>
<dbReference type="GO" id="GO:0006310">
    <property type="term" value="P:DNA recombination"/>
    <property type="evidence" value="ECO:0007669"/>
    <property type="project" value="UniProtKB-UniRule"/>
</dbReference>
<dbReference type="GO" id="GO:0006302">
    <property type="term" value="P:double-strand break repair"/>
    <property type="evidence" value="ECO:0007669"/>
    <property type="project" value="TreeGrafter"/>
</dbReference>
<dbReference type="Gene3D" id="2.40.50.140">
    <property type="entry name" value="Nucleic acid-binding proteins"/>
    <property type="match status" value="1"/>
</dbReference>
<dbReference type="Gene3D" id="1.20.1440.120">
    <property type="entry name" value="Recombination protein O, C-terminal domain"/>
    <property type="match status" value="1"/>
</dbReference>
<dbReference type="HAMAP" id="MF_00201">
    <property type="entry name" value="RecO"/>
    <property type="match status" value="1"/>
</dbReference>
<dbReference type="InterPro" id="IPR037278">
    <property type="entry name" value="ARFGAP/RecO"/>
</dbReference>
<dbReference type="InterPro" id="IPR022572">
    <property type="entry name" value="DNA_rep/recomb_RecO_N"/>
</dbReference>
<dbReference type="InterPro" id="IPR012340">
    <property type="entry name" value="NA-bd_OB-fold"/>
</dbReference>
<dbReference type="InterPro" id="IPR003717">
    <property type="entry name" value="RecO"/>
</dbReference>
<dbReference type="InterPro" id="IPR042242">
    <property type="entry name" value="RecO_C"/>
</dbReference>
<dbReference type="NCBIfam" id="TIGR00613">
    <property type="entry name" value="reco"/>
    <property type="match status" value="1"/>
</dbReference>
<dbReference type="PANTHER" id="PTHR33991">
    <property type="entry name" value="DNA REPAIR PROTEIN RECO"/>
    <property type="match status" value="1"/>
</dbReference>
<dbReference type="PANTHER" id="PTHR33991:SF1">
    <property type="entry name" value="DNA REPAIR PROTEIN RECO"/>
    <property type="match status" value="1"/>
</dbReference>
<dbReference type="Pfam" id="PF02565">
    <property type="entry name" value="RecO_C"/>
    <property type="match status" value="1"/>
</dbReference>
<dbReference type="Pfam" id="PF11967">
    <property type="entry name" value="RecO_N"/>
    <property type="match status" value="1"/>
</dbReference>
<dbReference type="SUPFAM" id="SSF57863">
    <property type="entry name" value="ArfGap/RecO-like zinc finger"/>
    <property type="match status" value="1"/>
</dbReference>
<dbReference type="SUPFAM" id="SSF50249">
    <property type="entry name" value="Nucleic acid-binding proteins"/>
    <property type="match status" value="1"/>
</dbReference>
<accession>B2I606</accession>